<feature type="chain" id="PRO_0000310946" description="Growth hormone secretagogue receptor type 1">
    <location>
        <begin position="1"/>
        <end position="366"/>
    </location>
</feature>
<feature type="topological domain" description="Extracellular" evidence="2">
    <location>
        <begin position="1"/>
        <end position="40"/>
    </location>
</feature>
<feature type="transmembrane region" description="Helical; Name=1" evidence="2">
    <location>
        <begin position="41"/>
        <end position="66"/>
    </location>
</feature>
<feature type="topological domain" description="Cytoplasmic" evidence="2">
    <location>
        <begin position="67"/>
        <end position="72"/>
    </location>
</feature>
<feature type="transmembrane region" description="Helical; Name=2" evidence="2">
    <location>
        <begin position="73"/>
        <end position="96"/>
    </location>
</feature>
<feature type="topological domain" description="Extracellular" evidence="2">
    <location>
        <begin position="97"/>
        <end position="117"/>
    </location>
</feature>
<feature type="transmembrane region" description="Helical; Name=3" evidence="2">
    <location>
        <begin position="118"/>
        <end position="139"/>
    </location>
</feature>
<feature type="topological domain" description="Cytoplasmic" evidence="2">
    <location>
        <begin position="140"/>
        <end position="162"/>
    </location>
</feature>
<feature type="transmembrane region" description="Helical; Name=4" evidence="2">
    <location>
        <begin position="163"/>
        <end position="183"/>
    </location>
</feature>
<feature type="topological domain" description="Extracellular" evidence="2">
    <location>
        <begin position="184"/>
        <end position="211"/>
    </location>
</feature>
<feature type="transmembrane region" description="Helical; Name=5" evidence="2">
    <location>
        <begin position="212"/>
        <end position="235"/>
    </location>
</feature>
<feature type="topological domain" description="Cytoplasmic" evidence="2">
    <location>
        <begin position="236"/>
        <end position="263"/>
    </location>
</feature>
<feature type="transmembrane region" description="Helical; Name=6" evidence="2">
    <location>
        <begin position="264"/>
        <end position="285"/>
    </location>
</feature>
<feature type="topological domain" description="Extracellular" evidence="2">
    <location>
        <begin position="286"/>
        <end position="302"/>
    </location>
</feature>
<feature type="transmembrane region" description="Helical; Name=7" evidence="2">
    <location>
        <begin position="303"/>
        <end position="326"/>
    </location>
</feature>
<feature type="topological domain" description="Cytoplasmic" evidence="2">
    <location>
        <begin position="327"/>
        <end position="366"/>
    </location>
</feature>
<feature type="glycosylation site" description="N-linked (GlcNAc...) asparagine" evidence="2">
    <location>
        <position position="13"/>
    </location>
</feature>
<feature type="glycosylation site" description="N-linked (GlcNAc...) asparagine" evidence="2">
    <location>
        <position position="27"/>
    </location>
</feature>
<feature type="glycosylation site" description="N-linked (GlcNAc...) asparagine" evidence="2">
    <location>
        <position position="188"/>
    </location>
</feature>
<feature type="disulfide bond" evidence="3">
    <location>
        <begin position="116"/>
        <end position="198"/>
    </location>
</feature>
<gene>
    <name type="primary">GHSR</name>
</gene>
<dbReference type="EMBL" id="EF526305">
    <property type="protein sequence ID" value="ABP88929.1"/>
    <property type="molecule type" value="mRNA"/>
</dbReference>
<dbReference type="RefSeq" id="NP_001093438.1">
    <property type="nucleotide sequence ID" value="NM_001099968.1"/>
</dbReference>
<dbReference type="SMR" id="A5A4K9"/>
<dbReference type="FunCoup" id="A5A4K9">
    <property type="interactions" value="168"/>
</dbReference>
<dbReference type="STRING" id="9986.ENSOCUP00000006345"/>
<dbReference type="BindingDB" id="A5A4K9"/>
<dbReference type="ChEMBL" id="CHEMBL5307"/>
<dbReference type="GlyCosmos" id="A5A4K9">
    <property type="glycosylation" value="3 sites, No reported glycans"/>
</dbReference>
<dbReference type="PaxDb" id="9986-ENSOCUP00000006345"/>
<dbReference type="Ensembl" id="ENSOCUT00000007339.4">
    <property type="protein sequence ID" value="ENSOCUP00000006345.2"/>
    <property type="gene ID" value="ENSOCUG00000007340.4"/>
</dbReference>
<dbReference type="GeneID" id="100101582"/>
<dbReference type="KEGG" id="ocu:100101582"/>
<dbReference type="CTD" id="2693"/>
<dbReference type="eggNOG" id="KOG3656">
    <property type="taxonomic scope" value="Eukaryota"/>
</dbReference>
<dbReference type="GeneTree" id="ENSGT01130000278335"/>
<dbReference type="HOGENOM" id="CLU_009579_6_5_1"/>
<dbReference type="InParanoid" id="A5A4K9"/>
<dbReference type="OMA" id="IGNLMTM"/>
<dbReference type="OrthoDB" id="10011262at2759"/>
<dbReference type="TreeFam" id="TF332184"/>
<dbReference type="PRO" id="PR:A5A4K9"/>
<dbReference type="Proteomes" id="UP000001811">
    <property type="component" value="Chromosome 14"/>
</dbReference>
<dbReference type="Bgee" id="ENSOCUG00000007340">
    <property type="expression patterns" value="Expressed in frontal cortex and 1 other cell type or tissue"/>
</dbReference>
<dbReference type="ExpressionAtlas" id="A5A4K9">
    <property type="expression patterns" value="baseline"/>
</dbReference>
<dbReference type="GO" id="GO:0009986">
    <property type="term" value="C:cell surface"/>
    <property type="evidence" value="ECO:0007669"/>
    <property type="project" value="Ensembl"/>
</dbReference>
<dbReference type="GO" id="GO:0045121">
    <property type="term" value="C:membrane raft"/>
    <property type="evidence" value="ECO:0007669"/>
    <property type="project" value="Ensembl"/>
</dbReference>
<dbReference type="GO" id="GO:0043005">
    <property type="term" value="C:neuron projection"/>
    <property type="evidence" value="ECO:0007669"/>
    <property type="project" value="Ensembl"/>
</dbReference>
<dbReference type="GO" id="GO:0005886">
    <property type="term" value="C:plasma membrane"/>
    <property type="evidence" value="ECO:0007669"/>
    <property type="project" value="UniProtKB-SubCell"/>
</dbReference>
<dbReference type="GO" id="GO:0001616">
    <property type="term" value="F:growth hormone secretagogue receptor activity"/>
    <property type="evidence" value="ECO:0007669"/>
    <property type="project" value="Ensembl"/>
</dbReference>
<dbReference type="GO" id="GO:0016520">
    <property type="term" value="F:growth hormone-releasing hormone receptor activity"/>
    <property type="evidence" value="ECO:0007669"/>
    <property type="project" value="Ensembl"/>
</dbReference>
<dbReference type="GO" id="GO:0008154">
    <property type="term" value="P:actin polymerization or depolymerization"/>
    <property type="evidence" value="ECO:0007669"/>
    <property type="project" value="Ensembl"/>
</dbReference>
<dbReference type="GO" id="GO:0008343">
    <property type="term" value="P:adult feeding behavior"/>
    <property type="evidence" value="ECO:0007669"/>
    <property type="project" value="Ensembl"/>
</dbReference>
<dbReference type="GO" id="GO:0032869">
    <property type="term" value="P:cellular response to insulin stimulus"/>
    <property type="evidence" value="ECO:0007669"/>
    <property type="project" value="Ensembl"/>
</dbReference>
<dbReference type="GO" id="GO:0046697">
    <property type="term" value="P:decidualization"/>
    <property type="evidence" value="ECO:0007669"/>
    <property type="project" value="Ensembl"/>
</dbReference>
<dbReference type="GO" id="GO:0030252">
    <property type="term" value="P:growth hormone secretion"/>
    <property type="evidence" value="ECO:0007669"/>
    <property type="project" value="Ensembl"/>
</dbReference>
<dbReference type="GO" id="GO:0009755">
    <property type="term" value="P:hormone-mediated signaling pathway"/>
    <property type="evidence" value="ECO:0007669"/>
    <property type="project" value="Ensembl"/>
</dbReference>
<dbReference type="GO" id="GO:0048009">
    <property type="term" value="P:insulin-like growth factor receptor signaling pathway"/>
    <property type="evidence" value="ECO:0007669"/>
    <property type="project" value="Ensembl"/>
</dbReference>
<dbReference type="GO" id="GO:0050728">
    <property type="term" value="P:negative regulation of inflammatory response"/>
    <property type="evidence" value="ECO:0007669"/>
    <property type="project" value="Ensembl"/>
</dbReference>
<dbReference type="GO" id="GO:0032691">
    <property type="term" value="P:negative regulation of interleukin-1 beta production"/>
    <property type="evidence" value="ECO:0007669"/>
    <property type="project" value="Ensembl"/>
</dbReference>
<dbReference type="GO" id="GO:0032715">
    <property type="term" value="P:negative regulation of interleukin-6 production"/>
    <property type="evidence" value="ECO:0007669"/>
    <property type="project" value="Ensembl"/>
</dbReference>
<dbReference type="GO" id="GO:0032720">
    <property type="term" value="P:negative regulation of tumor necrosis factor production"/>
    <property type="evidence" value="ECO:0007669"/>
    <property type="project" value="Ensembl"/>
</dbReference>
<dbReference type="GO" id="GO:0032100">
    <property type="term" value="P:positive regulation of appetite"/>
    <property type="evidence" value="ECO:0007669"/>
    <property type="project" value="Ensembl"/>
</dbReference>
<dbReference type="GO" id="GO:0043568">
    <property type="term" value="P:positive regulation of insulin-like growth factor receptor signaling pathway"/>
    <property type="evidence" value="ECO:0007669"/>
    <property type="project" value="Ensembl"/>
</dbReference>
<dbReference type="GO" id="GO:0040018">
    <property type="term" value="P:positive regulation of multicellular organism growth"/>
    <property type="evidence" value="ECO:0007669"/>
    <property type="project" value="Ensembl"/>
</dbReference>
<dbReference type="GO" id="GO:0051963">
    <property type="term" value="P:regulation of synapse assembly"/>
    <property type="evidence" value="ECO:0007669"/>
    <property type="project" value="Ensembl"/>
</dbReference>
<dbReference type="GO" id="GO:0032094">
    <property type="term" value="P:response to food"/>
    <property type="evidence" value="ECO:0007669"/>
    <property type="project" value="Ensembl"/>
</dbReference>
<dbReference type="CDD" id="cd15131">
    <property type="entry name" value="7tmA_GHSR"/>
    <property type="match status" value="1"/>
</dbReference>
<dbReference type="FunFam" id="1.20.1070.10:FF:000125">
    <property type="entry name" value="growth hormone secretagogue receptor type 1"/>
    <property type="match status" value="1"/>
</dbReference>
<dbReference type="Gene3D" id="1.20.1070.10">
    <property type="entry name" value="Rhodopsin 7-helix transmembrane proteins"/>
    <property type="match status" value="1"/>
</dbReference>
<dbReference type="InterPro" id="IPR003905">
    <property type="entry name" value="GHS-R/MTLR"/>
</dbReference>
<dbReference type="InterPro" id="IPR000276">
    <property type="entry name" value="GPCR_Rhodpsn"/>
</dbReference>
<dbReference type="InterPro" id="IPR017452">
    <property type="entry name" value="GPCR_Rhodpsn_7TM"/>
</dbReference>
<dbReference type="PANTHER" id="PTHR24243">
    <property type="entry name" value="G-PROTEIN COUPLED RECEPTOR"/>
    <property type="match status" value="1"/>
</dbReference>
<dbReference type="PANTHER" id="PTHR24243:SF7">
    <property type="entry name" value="GROWTH HORMONE SECRETAGOGUE RECEPTOR TYPE 1"/>
    <property type="match status" value="1"/>
</dbReference>
<dbReference type="Pfam" id="PF00001">
    <property type="entry name" value="7tm_1"/>
    <property type="match status" value="1"/>
</dbReference>
<dbReference type="PRINTS" id="PR01417">
    <property type="entry name" value="GHSRECEPTOR"/>
</dbReference>
<dbReference type="PRINTS" id="PR00237">
    <property type="entry name" value="GPCRRHODOPSN"/>
</dbReference>
<dbReference type="SUPFAM" id="SSF81321">
    <property type="entry name" value="Family A G protein-coupled receptor-like"/>
    <property type="match status" value="1"/>
</dbReference>
<dbReference type="PROSITE" id="PS00237">
    <property type="entry name" value="G_PROTEIN_RECEP_F1_1"/>
    <property type="match status" value="1"/>
</dbReference>
<dbReference type="PROSITE" id="PS50262">
    <property type="entry name" value="G_PROTEIN_RECEP_F1_2"/>
    <property type="match status" value="1"/>
</dbReference>
<proteinExistence type="evidence at transcript level"/>
<organism>
    <name type="scientific">Oryctolagus cuniculus</name>
    <name type="common">Rabbit</name>
    <dbReference type="NCBI Taxonomy" id="9986"/>
    <lineage>
        <taxon>Eukaryota</taxon>
        <taxon>Metazoa</taxon>
        <taxon>Chordata</taxon>
        <taxon>Craniata</taxon>
        <taxon>Vertebrata</taxon>
        <taxon>Euteleostomi</taxon>
        <taxon>Mammalia</taxon>
        <taxon>Eutheria</taxon>
        <taxon>Euarchontoglires</taxon>
        <taxon>Glires</taxon>
        <taxon>Lagomorpha</taxon>
        <taxon>Leporidae</taxon>
        <taxon>Oryctolagus</taxon>
    </lineage>
</organism>
<protein>
    <recommendedName>
        <fullName>Growth hormone secretagogue receptor type 1</fullName>
        <shortName>GHS-R</shortName>
    </recommendedName>
    <alternativeName>
        <fullName>GH-releasing peptide receptor</fullName>
        <shortName>GHRP</shortName>
    </alternativeName>
    <alternativeName>
        <fullName>Ghrelin receptor</fullName>
    </alternativeName>
</protein>
<accession>A5A4K9</accession>
<sequence>MWNATPSEEPGSNLTRAELGWDAPPGNDSLADELLQLFPAPLLAGVTATCVALFVVGIAGNLLTMLVVSRFRELRTTTNLYLSSMAFSDLLIFLCMPLDLVRLWQYRPWNFGDLLCKLFQFVSESCTYATVLTITALSVERYFAICFPLRAKVVVTKGRVKLVILVIWALAFCSAGPIFVLVGVEHENGTDPQDTNECRATEFAVRSGLLTIMVWVSSVFFFLPVFCLTVLYSLIGRKLWRRKRGDGAVGSSLRDQNHRQTVKMLAVVVFAFILCWLPFHVGRYLFSKSFEPGSLEIAQISQYCNLVSFVLFYLSAAINPILYNIMSKKYRVAVFKLLGFEPFSQRKLSTLKDESSRAWTKSSINT</sequence>
<name>GHSR_RABIT</name>
<evidence type="ECO:0000250" key="1"/>
<evidence type="ECO:0000255" key="2"/>
<evidence type="ECO:0000255" key="3">
    <source>
        <dbReference type="PROSITE-ProRule" id="PRU00521"/>
    </source>
</evidence>
<keyword id="KW-1003">Cell membrane</keyword>
<keyword id="KW-1015">Disulfide bond</keyword>
<keyword id="KW-0297">G-protein coupled receptor</keyword>
<keyword id="KW-0325">Glycoprotein</keyword>
<keyword id="KW-0472">Membrane</keyword>
<keyword id="KW-0675">Receptor</keyword>
<keyword id="KW-1185">Reference proteome</keyword>
<keyword id="KW-0807">Transducer</keyword>
<keyword id="KW-0812">Transmembrane</keyword>
<keyword id="KW-1133">Transmembrane helix</keyword>
<reference key="1">
    <citation type="submission" date="2007-03" db="EMBL/GenBank/DDBJ databases">
        <title>Ghrelin receptor orthologs.</title>
        <authorList>
            <person name="van der Keyl H.K."/>
        </authorList>
    </citation>
    <scope>NUCLEOTIDE SEQUENCE [MRNA]</scope>
</reference>
<comment type="function">
    <text evidence="1">Receptor for ghrelin, coupled to G-alpha-11 proteins. Stimulates growth hormone secretion. Also binds other growth hormone releasing peptides (GHRP) (e.g. Met-enkephalin and GHRP-6) as well as non-peptide, low molecular weight secretagogues (e.g. L-692,429, MK-0677, adenosine) (By similarity).</text>
</comment>
<comment type="subcellular location">
    <subcellularLocation>
        <location evidence="1">Cell membrane</location>
        <topology evidence="1">Multi-pass membrane protein</topology>
    </subcellularLocation>
</comment>
<comment type="similarity">
    <text evidence="3">Belongs to the G-protein coupled receptor 1 family.</text>
</comment>